<reference evidence="9" key="1">
    <citation type="journal article" date="2000" name="Science">
        <title>The genome sequence of Drosophila melanogaster.</title>
        <authorList>
            <person name="Adams M.D."/>
            <person name="Celniker S.E."/>
            <person name="Holt R.A."/>
            <person name="Evans C.A."/>
            <person name="Gocayne J.D."/>
            <person name="Amanatides P.G."/>
            <person name="Scherer S.E."/>
            <person name="Li P.W."/>
            <person name="Hoskins R.A."/>
            <person name="Galle R.F."/>
            <person name="George R.A."/>
            <person name="Lewis S.E."/>
            <person name="Richards S."/>
            <person name="Ashburner M."/>
            <person name="Henderson S.N."/>
            <person name="Sutton G.G."/>
            <person name="Wortman J.R."/>
            <person name="Yandell M.D."/>
            <person name="Zhang Q."/>
            <person name="Chen L.X."/>
            <person name="Brandon R.C."/>
            <person name="Rogers Y.-H.C."/>
            <person name="Blazej R.G."/>
            <person name="Champe M."/>
            <person name="Pfeiffer B.D."/>
            <person name="Wan K.H."/>
            <person name="Doyle C."/>
            <person name="Baxter E.G."/>
            <person name="Helt G."/>
            <person name="Nelson C.R."/>
            <person name="Miklos G.L.G."/>
            <person name="Abril J.F."/>
            <person name="Agbayani A."/>
            <person name="An H.-J."/>
            <person name="Andrews-Pfannkoch C."/>
            <person name="Baldwin D."/>
            <person name="Ballew R.M."/>
            <person name="Basu A."/>
            <person name="Baxendale J."/>
            <person name="Bayraktaroglu L."/>
            <person name="Beasley E.M."/>
            <person name="Beeson K.Y."/>
            <person name="Benos P.V."/>
            <person name="Berman B.P."/>
            <person name="Bhandari D."/>
            <person name="Bolshakov S."/>
            <person name="Borkova D."/>
            <person name="Botchan M.R."/>
            <person name="Bouck J."/>
            <person name="Brokstein P."/>
            <person name="Brottier P."/>
            <person name="Burtis K.C."/>
            <person name="Busam D.A."/>
            <person name="Butler H."/>
            <person name="Cadieu E."/>
            <person name="Center A."/>
            <person name="Chandra I."/>
            <person name="Cherry J.M."/>
            <person name="Cawley S."/>
            <person name="Dahlke C."/>
            <person name="Davenport L.B."/>
            <person name="Davies P."/>
            <person name="de Pablos B."/>
            <person name="Delcher A."/>
            <person name="Deng Z."/>
            <person name="Mays A.D."/>
            <person name="Dew I."/>
            <person name="Dietz S.M."/>
            <person name="Dodson K."/>
            <person name="Doup L.E."/>
            <person name="Downes M."/>
            <person name="Dugan-Rocha S."/>
            <person name="Dunkov B.C."/>
            <person name="Dunn P."/>
            <person name="Durbin K.J."/>
            <person name="Evangelista C.C."/>
            <person name="Ferraz C."/>
            <person name="Ferriera S."/>
            <person name="Fleischmann W."/>
            <person name="Fosler C."/>
            <person name="Gabrielian A.E."/>
            <person name="Garg N.S."/>
            <person name="Gelbart W.M."/>
            <person name="Glasser K."/>
            <person name="Glodek A."/>
            <person name="Gong F."/>
            <person name="Gorrell J.H."/>
            <person name="Gu Z."/>
            <person name="Guan P."/>
            <person name="Harris M."/>
            <person name="Harris N.L."/>
            <person name="Harvey D.A."/>
            <person name="Heiman T.J."/>
            <person name="Hernandez J.R."/>
            <person name="Houck J."/>
            <person name="Hostin D."/>
            <person name="Houston K.A."/>
            <person name="Howland T.J."/>
            <person name="Wei M.-H."/>
            <person name="Ibegwam C."/>
            <person name="Jalali M."/>
            <person name="Kalush F."/>
            <person name="Karpen G.H."/>
            <person name="Ke Z."/>
            <person name="Kennison J.A."/>
            <person name="Ketchum K.A."/>
            <person name="Kimmel B.E."/>
            <person name="Kodira C.D."/>
            <person name="Kraft C.L."/>
            <person name="Kravitz S."/>
            <person name="Kulp D."/>
            <person name="Lai Z."/>
            <person name="Lasko P."/>
            <person name="Lei Y."/>
            <person name="Levitsky A.A."/>
            <person name="Li J.H."/>
            <person name="Li Z."/>
            <person name="Liang Y."/>
            <person name="Lin X."/>
            <person name="Liu X."/>
            <person name="Mattei B."/>
            <person name="McIntosh T.C."/>
            <person name="McLeod M.P."/>
            <person name="McPherson D."/>
            <person name="Merkulov G."/>
            <person name="Milshina N.V."/>
            <person name="Mobarry C."/>
            <person name="Morris J."/>
            <person name="Moshrefi A."/>
            <person name="Mount S.M."/>
            <person name="Moy M."/>
            <person name="Murphy B."/>
            <person name="Murphy L."/>
            <person name="Muzny D.M."/>
            <person name="Nelson D.L."/>
            <person name="Nelson D.R."/>
            <person name="Nelson K.A."/>
            <person name="Nixon K."/>
            <person name="Nusskern D.R."/>
            <person name="Pacleb J.M."/>
            <person name="Palazzolo M."/>
            <person name="Pittman G.S."/>
            <person name="Pan S."/>
            <person name="Pollard J."/>
            <person name="Puri V."/>
            <person name="Reese M.G."/>
            <person name="Reinert K."/>
            <person name="Remington K."/>
            <person name="Saunders R.D.C."/>
            <person name="Scheeler F."/>
            <person name="Shen H."/>
            <person name="Shue B.C."/>
            <person name="Siden-Kiamos I."/>
            <person name="Simpson M."/>
            <person name="Skupski M.P."/>
            <person name="Smith T.J."/>
            <person name="Spier E."/>
            <person name="Spradling A.C."/>
            <person name="Stapleton M."/>
            <person name="Strong R."/>
            <person name="Sun E."/>
            <person name="Svirskas R."/>
            <person name="Tector C."/>
            <person name="Turner R."/>
            <person name="Venter E."/>
            <person name="Wang A.H."/>
            <person name="Wang X."/>
            <person name="Wang Z.-Y."/>
            <person name="Wassarman D.A."/>
            <person name="Weinstock G.M."/>
            <person name="Weissenbach J."/>
            <person name="Williams S.M."/>
            <person name="Woodage T."/>
            <person name="Worley K.C."/>
            <person name="Wu D."/>
            <person name="Yang S."/>
            <person name="Yao Q.A."/>
            <person name="Ye J."/>
            <person name="Yeh R.-F."/>
            <person name="Zaveri J.S."/>
            <person name="Zhan M."/>
            <person name="Zhang G."/>
            <person name="Zhao Q."/>
            <person name="Zheng L."/>
            <person name="Zheng X.H."/>
            <person name="Zhong F.N."/>
            <person name="Zhong W."/>
            <person name="Zhou X."/>
            <person name="Zhu S.C."/>
            <person name="Zhu X."/>
            <person name="Smith H.O."/>
            <person name="Gibbs R.A."/>
            <person name="Myers E.W."/>
            <person name="Rubin G.M."/>
            <person name="Venter J.C."/>
        </authorList>
    </citation>
    <scope>NUCLEOTIDE SEQUENCE [LARGE SCALE GENOMIC DNA]</scope>
    <source>
        <strain evidence="9">Berkeley</strain>
    </source>
</reference>
<reference evidence="9" key="2">
    <citation type="journal article" date="2002" name="Genome Biol.">
        <title>Annotation of the Drosophila melanogaster euchromatic genome: a systematic review.</title>
        <authorList>
            <person name="Misra S."/>
            <person name="Crosby M.A."/>
            <person name="Mungall C.J."/>
            <person name="Matthews B.B."/>
            <person name="Campbell K.S."/>
            <person name="Hradecky P."/>
            <person name="Huang Y."/>
            <person name="Kaminker J.S."/>
            <person name="Millburn G.H."/>
            <person name="Prochnik S.E."/>
            <person name="Smith C.D."/>
            <person name="Tupy J.L."/>
            <person name="Whitfield E.J."/>
            <person name="Bayraktaroglu L."/>
            <person name="Berman B.P."/>
            <person name="Bettencourt B.R."/>
            <person name="Celniker S.E."/>
            <person name="de Grey A.D.N.J."/>
            <person name="Drysdale R.A."/>
            <person name="Harris N.L."/>
            <person name="Richter J."/>
            <person name="Russo S."/>
            <person name="Schroeder A.J."/>
            <person name="Shu S.Q."/>
            <person name="Stapleton M."/>
            <person name="Yamada C."/>
            <person name="Ashburner M."/>
            <person name="Gelbart W.M."/>
            <person name="Rubin G.M."/>
            <person name="Lewis S.E."/>
        </authorList>
    </citation>
    <scope>GENOME REANNOTATION</scope>
    <source>
        <strain evidence="9">Berkeley</strain>
    </source>
</reference>
<reference evidence="7" key="3">
    <citation type="submission" date="2005-08" db="EMBL/GenBank/DDBJ databases">
        <authorList>
            <person name="Stapleton M."/>
            <person name="Carlson J."/>
            <person name="Chavez C."/>
            <person name="Frise E."/>
            <person name="George R."/>
            <person name="Pacleb J."/>
            <person name="Park S."/>
            <person name="Wan K."/>
            <person name="Yu C."/>
            <person name="Celniker S."/>
        </authorList>
    </citation>
    <scope>NUCLEOTIDE SEQUENCE [LARGE SCALE MRNA]</scope>
    <source>
        <strain evidence="7">Berkeley</strain>
        <tissue evidence="7">Embryo</tissue>
    </source>
</reference>
<reference evidence="6" key="4">
    <citation type="journal article" date="2016" name="PLoS Genet.">
        <title>The Drosophila ETV5 homologue Ets96B: molecular link between obesity and bipolar disorder.</title>
        <authorList>
            <person name="Williams M.J."/>
            <person name="Klockars A."/>
            <person name="Eriksson A."/>
            <person name="Voisin S."/>
            <person name="Dnyansagar R."/>
            <person name="Wiemerslage L."/>
            <person name="Kasagiannis A."/>
            <person name="Akram M."/>
            <person name="Kheder S."/>
            <person name="Ambrosi V."/>
            <person name="Hallqvist E."/>
            <person name="Fredriksson R."/>
            <person name="Schioeth H.B."/>
        </authorList>
    </citation>
    <scope>FUNCTION</scope>
    <scope>TISSUE SPECIFICITY</scope>
    <scope>DEVELOPMENTAL STAGE</scope>
    <scope>INDUCTION BY STARVATION</scope>
    <scope>DISRUPTION PHENOTYPE</scope>
</reference>
<proteinExistence type="evidence at transcript level"/>
<organism evidence="7">
    <name type="scientific">Drosophila melanogaster</name>
    <name type="common">Fruit fly</name>
    <dbReference type="NCBI Taxonomy" id="7227"/>
    <lineage>
        <taxon>Eukaryota</taxon>
        <taxon>Metazoa</taxon>
        <taxon>Ecdysozoa</taxon>
        <taxon>Arthropoda</taxon>
        <taxon>Hexapoda</taxon>
        <taxon>Insecta</taxon>
        <taxon>Pterygota</taxon>
        <taxon>Neoptera</taxon>
        <taxon>Endopterygota</taxon>
        <taxon>Diptera</taxon>
        <taxon>Brachycera</taxon>
        <taxon>Muscomorpha</taxon>
        <taxon>Ephydroidea</taxon>
        <taxon>Drosophilidae</taxon>
        <taxon>Drosophila</taxon>
        <taxon>Sophophora</taxon>
    </lineage>
</organism>
<feature type="chain" id="PRO_0000437485" description="ETV5-related protein Ets96B" evidence="6">
    <location>
        <begin position="1"/>
        <end position="640"/>
    </location>
</feature>
<feature type="DNA-binding region" description="ETS" evidence="2">
    <location>
        <begin position="498"/>
        <end position="579"/>
    </location>
</feature>
<feature type="region of interest" description="Disordered" evidence="4">
    <location>
        <begin position="315"/>
        <end position="375"/>
    </location>
</feature>
<feature type="region of interest" description="Disordered" evidence="4">
    <location>
        <begin position="609"/>
        <end position="628"/>
    </location>
</feature>
<feature type="coiled-coil region" evidence="1">
    <location>
        <begin position="321"/>
        <end position="356"/>
    </location>
</feature>
<feature type="compositionally biased region" description="Low complexity" evidence="4">
    <location>
        <begin position="322"/>
        <end position="355"/>
    </location>
</feature>
<feature type="compositionally biased region" description="Basic residues" evidence="4">
    <location>
        <begin position="356"/>
        <end position="369"/>
    </location>
</feature>
<feature type="compositionally biased region" description="Polar residues" evidence="4">
    <location>
        <begin position="609"/>
        <end position="624"/>
    </location>
</feature>
<feature type="splice variant" id="VSP_058542" description="In isoform C." evidence="6">
    <original>TISWRALSHFLIPQ</original>
    <variation>DTAKL</variation>
    <location>
        <begin position="2"/>
        <end position="15"/>
    </location>
</feature>
<accession>Q8MRW5</accession>
<accession>Q9VC38</accession>
<name>ET96B_DROME</name>
<comment type="function">
    <text evidence="5">Required in dopaminergic neurons to regulate expression of genes involved in dopamine signaling. Decreases expression of the dopamine transporter DAT and increases expression of the dopamine transporter Vmat and the tyrosine 3-monooxygenase ple which is involved in dopamine biosynthesis. Also involved in negatively regulating the expression of a group of endoplasmic reticulum proteins, the molecular chaperone Calr and the protein disulfide isomerases CaBP1 and ERp60.</text>
</comment>
<comment type="subcellular location">
    <subcellularLocation>
        <location evidence="1 2">Nucleus</location>
    </subcellularLocation>
</comment>
<comment type="alternative products">
    <event type="alternative splicing"/>
    <isoform>
        <id>Q8MRW5-1</id>
        <name evidence="8">B</name>
        <sequence type="displayed"/>
    </isoform>
    <isoform>
        <id>Q8MRW5-2</id>
        <name evidence="8">C</name>
        <sequence type="described" ref="VSP_058542"/>
    </isoform>
</comment>
<comment type="tissue specificity">
    <text evidence="5">In the adult brain, expressed almost exclusively in dopaminergic neurons.</text>
</comment>
<comment type="developmental stage">
    <molecule>Isoform C</molecule>
    <text evidence="5">Expressed only in the adult.</text>
</comment>
<comment type="induction">
    <text evidence="5">By starvation.</text>
</comment>
<comment type="disruption phenotype">
    <text evidence="5">RNAi-mediated knockdown in the central nervous system (CNS) during development increases the expression of CaBP1, Calr and ERp60 and regulates expression of other genes involved in a variety of processes including oxidative phosphorylation and redox reactions, lipid and sugar homeostasis, and translation. It increases susceptibility to starvation but has no effect on feeding behavior. It increases triacylglyceride (TAG) levels in normal-fed flies but has no effect on TAG levels 12 or 24 hours after starvation. It also induces a heightened startle-response, increases hyperactivity and reduces sleep. RNAi-mediated knockdown specifically in dopaminergic neurons throughout development influences the expression of genes involved in dopamine signaling by increasing expression of ple and Vmat and decreasing expression of DAT. It also recapitulates the effects seen following CNS knockdown, namely increased susceptibility to starvation, heightened startle-response and reduced sleep. RNAi-mediated knockdown specifically in the adult CNS increases resistance to starvation with no effect on feeding behavior, decreases TAG levels in normal-fed flies and has no effect on hyperactivity or sleep.</text>
</comment>
<comment type="similarity">
    <text evidence="1 3">Belongs to the ETS family.</text>
</comment>
<evidence type="ECO:0000255" key="1"/>
<evidence type="ECO:0000255" key="2">
    <source>
        <dbReference type="PROSITE-ProRule" id="PRU00237"/>
    </source>
</evidence>
<evidence type="ECO:0000255" key="3">
    <source>
        <dbReference type="RuleBase" id="RU004019"/>
    </source>
</evidence>
<evidence type="ECO:0000256" key="4">
    <source>
        <dbReference type="SAM" id="MobiDB-lite"/>
    </source>
</evidence>
<evidence type="ECO:0000269" key="5">
    <source>
    </source>
</evidence>
<evidence type="ECO:0000305" key="6"/>
<evidence type="ECO:0000312" key="7">
    <source>
        <dbReference type="EMBL" id="AAM51090.1"/>
    </source>
</evidence>
<evidence type="ECO:0000312" key="8">
    <source>
        <dbReference type="FlyBase" id="FBgn0039225"/>
    </source>
</evidence>
<evidence type="ECO:0000312" key="9">
    <source>
        <dbReference type="Proteomes" id="UP000000803"/>
    </source>
</evidence>
<protein>
    <recommendedName>
        <fullName evidence="6">ETV5-related protein Ets96B</fullName>
    </recommendedName>
</protein>
<gene>
    <name evidence="8" type="primary">Ets96B</name>
    <name evidence="8" type="ORF">CG6892</name>
</gene>
<dbReference type="EMBL" id="AE014297">
    <property type="protein sequence ID" value="AAF56337.3"/>
    <property type="molecule type" value="Genomic_DNA"/>
</dbReference>
<dbReference type="EMBL" id="AE014297">
    <property type="protein sequence ID" value="AAS65212.1"/>
    <property type="molecule type" value="Genomic_DNA"/>
</dbReference>
<dbReference type="EMBL" id="AY119230">
    <property type="protein sequence ID" value="AAM51090.1"/>
    <property type="molecule type" value="mRNA"/>
</dbReference>
<dbReference type="RefSeq" id="NP_651286.3">
    <molecule id="Q8MRW5-2"/>
    <property type="nucleotide sequence ID" value="NM_143029.3"/>
</dbReference>
<dbReference type="RefSeq" id="NP_996290.1">
    <molecule id="Q8MRW5-1"/>
    <property type="nucleotide sequence ID" value="NM_206567.2"/>
</dbReference>
<dbReference type="SMR" id="Q8MRW5"/>
<dbReference type="FunCoup" id="Q8MRW5">
    <property type="interactions" value="366"/>
</dbReference>
<dbReference type="IntAct" id="Q8MRW5">
    <property type="interactions" value="2"/>
</dbReference>
<dbReference type="STRING" id="7227.FBpp0089401"/>
<dbReference type="GlyGen" id="Q8MRW5">
    <property type="glycosylation" value="3 sites"/>
</dbReference>
<dbReference type="PaxDb" id="7227-FBpp0089401"/>
<dbReference type="EnsemblMetazoa" id="FBtr0084697">
    <molecule id="Q8MRW5-1"/>
    <property type="protein sequence ID" value="FBpp0089401"/>
    <property type="gene ID" value="FBgn0039225"/>
</dbReference>
<dbReference type="EnsemblMetazoa" id="FBtr0339254">
    <molecule id="Q8MRW5-2"/>
    <property type="protein sequence ID" value="FBpp0308361"/>
    <property type="gene ID" value="FBgn0039225"/>
</dbReference>
<dbReference type="GeneID" id="42952"/>
<dbReference type="KEGG" id="dme:Dmel_CG6892"/>
<dbReference type="UCSC" id="CG6892-RA">
    <property type="organism name" value="d. melanogaster"/>
</dbReference>
<dbReference type="UCSC" id="CG6892-RB">
    <molecule id="Q8MRW5-1"/>
    <property type="organism name" value="d. melanogaster"/>
</dbReference>
<dbReference type="AGR" id="FB:FBgn0039225"/>
<dbReference type="CTD" id="42952"/>
<dbReference type="FlyBase" id="FBgn0039225">
    <property type="gene designation" value="Ets96B"/>
</dbReference>
<dbReference type="VEuPathDB" id="VectorBase:FBgn0039225"/>
<dbReference type="eggNOG" id="KOG3806">
    <property type="taxonomic scope" value="Eukaryota"/>
</dbReference>
<dbReference type="GeneTree" id="ENSGT00940000158142"/>
<dbReference type="InParanoid" id="Q8MRW5"/>
<dbReference type="OMA" id="TLMEAIC"/>
<dbReference type="OrthoDB" id="10067219at2759"/>
<dbReference type="PhylomeDB" id="Q8MRW5"/>
<dbReference type="Reactome" id="R-DME-5687128">
    <property type="pathway name" value="MAPK6/MAPK4 signaling"/>
</dbReference>
<dbReference type="BioGRID-ORCS" id="42952">
    <property type="hits" value="0 hits in 3 CRISPR screens"/>
</dbReference>
<dbReference type="GenomeRNAi" id="42952"/>
<dbReference type="PRO" id="PR:Q8MRW5"/>
<dbReference type="Proteomes" id="UP000000803">
    <property type="component" value="Chromosome 3R"/>
</dbReference>
<dbReference type="Bgee" id="FBgn0039225">
    <property type="expression patterns" value="Expressed in tendon cell (Drosophila) in body wall and 6 other cell types or tissues"/>
</dbReference>
<dbReference type="ExpressionAtlas" id="Q8MRW5">
    <property type="expression patterns" value="baseline and differential"/>
</dbReference>
<dbReference type="GO" id="GO:0005634">
    <property type="term" value="C:nucleus"/>
    <property type="evidence" value="ECO:0000318"/>
    <property type="project" value="GO_Central"/>
</dbReference>
<dbReference type="GO" id="GO:0000981">
    <property type="term" value="F:DNA-binding transcription factor activity, RNA polymerase II-specific"/>
    <property type="evidence" value="ECO:0000318"/>
    <property type="project" value="GO_Central"/>
</dbReference>
<dbReference type="GO" id="GO:0043565">
    <property type="term" value="F:sequence-specific DNA binding"/>
    <property type="evidence" value="ECO:0007669"/>
    <property type="project" value="InterPro"/>
</dbReference>
<dbReference type="GO" id="GO:0030154">
    <property type="term" value="P:cell differentiation"/>
    <property type="evidence" value="ECO:0000318"/>
    <property type="project" value="GO_Central"/>
</dbReference>
<dbReference type="GO" id="GO:0045938">
    <property type="term" value="P:positive regulation of circadian sleep/wake cycle, sleep"/>
    <property type="evidence" value="ECO:0000315"/>
    <property type="project" value="UniProtKB"/>
</dbReference>
<dbReference type="GO" id="GO:0060159">
    <property type="term" value="P:regulation of dopamine receptor signaling pathway"/>
    <property type="evidence" value="ECO:0000315"/>
    <property type="project" value="UniProtKB"/>
</dbReference>
<dbReference type="GO" id="GO:0006357">
    <property type="term" value="P:regulation of transcription by RNA polymerase II"/>
    <property type="evidence" value="ECO:0000318"/>
    <property type="project" value="GO_Central"/>
</dbReference>
<dbReference type="GO" id="GO:0042594">
    <property type="term" value="P:response to starvation"/>
    <property type="evidence" value="ECO:0000315"/>
    <property type="project" value="UniProtKB"/>
</dbReference>
<dbReference type="GO" id="GO:0001964">
    <property type="term" value="P:startle response"/>
    <property type="evidence" value="ECO:0000315"/>
    <property type="project" value="UniProtKB"/>
</dbReference>
<dbReference type="FunFam" id="1.10.10.10:FF:000121">
    <property type="entry name" value="ETS translocation variant 5"/>
    <property type="match status" value="1"/>
</dbReference>
<dbReference type="Gene3D" id="1.10.10.10">
    <property type="entry name" value="Winged helix-like DNA-binding domain superfamily/Winged helix DNA-binding domain"/>
    <property type="match status" value="1"/>
</dbReference>
<dbReference type="InterPro" id="IPR000418">
    <property type="entry name" value="Ets_dom"/>
</dbReference>
<dbReference type="InterPro" id="IPR046328">
    <property type="entry name" value="ETS_fam"/>
</dbReference>
<dbReference type="InterPro" id="IPR036388">
    <property type="entry name" value="WH-like_DNA-bd_sf"/>
</dbReference>
<dbReference type="InterPro" id="IPR036390">
    <property type="entry name" value="WH_DNA-bd_sf"/>
</dbReference>
<dbReference type="PANTHER" id="PTHR11849">
    <property type="entry name" value="ETS"/>
    <property type="match status" value="1"/>
</dbReference>
<dbReference type="PANTHER" id="PTHR11849:SF282">
    <property type="entry name" value="ETV5-RELATED PROTEIN ETS96B"/>
    <property type="match status" value="1"/>
</dbReference>
<dbReference type="Pfam" id="PF00178">
    <property type="entry name" value="Ets"/>
    <property type="match status" value="1"/>
</dbReference>
<dbReference type="PRINTS" id="PR00454">
    <property type="entry name" value="ETSDOMAIN"/>
</dbReference>
<dbReference type="SMART" id="SM00413">
    <property type="entry name" value="ETS"/>
    <property type="match status" value="1"/>
</dbReference>
<dbReference type="SUPFAM" id="SSF46785">
    <property type="entry name" value="Winged helix' DNA-binding domain"/>
    <property type="match status" value="1"/>
</dbReference>
<dbReference type="PROSITE" id="PS00345">
    <property type="entry name" value="ETS_DOMAIN_1"/>
    <property type="match status" value="1"/>
</dbReference>
<dbReference type="PROSITE" id="PS00346">
    <property type="entry name" value="ETS_DOMAIN_2"/>
    <property type="match status" value="1"/>
</dbReference>
<dbReference type="PROSITE" id="PS50061">
    <property type="entry name" value="ETS_DOMAIN_3"/>
    <property type="match status" value="1"/>
</dbReference>
<keyword id="KW-0025">Alternative splicing</keyword>
<keyword id="KW-0175">Coiled coil</keyword>
<keyword id="KW-0238">DNA-binding</keyword>
<keyword id="KW-0539">Nucleus</keyword>
<keyword id="KW-1185">Reference proteome</keyword>
<keyword id="KW-0804">Transcription</keyword>
<keyword id="KW-0805">Transcription regulation</keyword>
<sequence>MTISWRALSHFLIPQSDYGEAKTHLEQLQQTLTHLDHPHHHHAHHPHHHLGLYHGALPNTSTITTDSVVSCVSSTLPAVAKAISASSSCDGLQSERKKCPISDLDSGGHGHGQGHGLMEAICAGQKTSPIPPPPPPCCLTLGESSSSPNPIATAALMNASTSGSSSAGGASASLCNDLTRESSWYAHHHHHHHHHHHQLPDELVMYATPTPTPAIGKFGLDTSTEGYLNARYNVNVKGVRHDRTSSFFDIPAVTHPHNHPHPHPHPHPHPYCYRFPSSPPAGILKKSDEEATSAAVYCSDVSSGQHFPHHTKIEHADSTTTAAQQQQQQQEQQQQQQQQQQQQQHQQQLQQAAALHPHHHHSHHGHHGHQQAEQQALTHLTPLHAASAFKFSHTAVISSSAVYATPSHYAHQQQTQSQSVYRDLSPTTLAAVSDADLKYDSGPYNAAISSTYPSALRPNVVDSTTSSDAELRLDQFYASNGISTSSNGQAISQRRGSLQLWQFLVALLDEPTTSASCIAWTGRGMEFKLIEPEEVARRWGLQKNRPAMNYDKLSRSLRYYYEKGIMQKVNGERYVYRFVCDPDALFNMAYGHLTTGSGKGDQHQLTLSLAKTPPTSGDSQTQSPRVAKSEYYDTAALHKY</sequence>